<proteinExistence type="evidence at protein level"/>
<reference key="1">
    <citation type="journal article" date="2001" name="Nature">
        <title>The DNA sequence and comparative analysis of human chromosome 20.</title>
        <authorList>
            <person name="Deloukas P."/>
            <person name="Matthews L.H."/>
            <person name="Ashurst J.L."/>
            <person name="Burton J."/>
            <person name="Gilbert J.G.R."/>
            <person name="Jones M."/>
            <person name="Stavrides G."/>
            <person name="Almeida J.P."/>
            <person name="Babbage A.K."/>
            <person name="Bagguley C.L."/>
            <person name="Bailey J."/>
            <person name="Barlow K.F."/>
            <person name="Bates K.N."/>
            <person name="Beard L.M."/>
            <person name="Beare D.M."/>
            <person name="Beasley O.P."/>
            <person name="Bird C.P."/>
            <person name="Blakey S.E."/>
            <person name="Bridgeman A.M."/>
            <person name="Brown A.J."/>
            <person name="Buck D."/>
            <person name="Burrill W.D."/>
            <person name="Butler A.P."/>
            <person name="Carder C."/>
            <person name="Carter N.P."/>
            <person name="Chapman J.C."/>
            <person name="Clamp M."/>
            <person name="Clark G."/>
            <person name="Clark L.N."/>
            <person name="Clark S.Y."/>
            <person name="Clee C.M."/>
            <person name="Clegg S."/>
            <person name="Cobley V.E."/>
            <person name="Collier R.E."/>
            <person name="Connor R.E."/>
            <person name="Corby N.R."/>
            <person name="Coulson A."/>
            <person name="Coville G.J."/>
            <person name="Deadman R."/>
            <person name="Dhami P.D."/>
            <person name="Dunn M."/>
            <person name="Ellington A.G."/>
            <person name="Frankland J.A."/>
            <person name="Fraser A."/>
            <person name="French L."/>
            <person name="Garner P."/>
            <person name="Grafham D.V."/>
            <person name="Griffiths C."/>
            <person name="Griffiths M.N.D."/>
            <person name="Gwilliam R."/>
            <person name="Hall R.E."/>
            <person name="Hammond S."/>
            <person name="Harley J.L."/>
            <person name="Heath P.D."/>
            <person name="Ho S."/>
            <person name="Holden J.L."/>
            <person name="Howden P.J."/>
            <person name="Huckle E."/>
            <person name="Hunt A.R."/>
            <person name="Hunt S.E."/>
            <person name="Jekosch K."/>
            <person name="Johnson C.M."/>
            <person name="Johnson D."/>
            <person name="Kay M.P."/>
            <person name="Kimberley A.M."/>
            <person name="King A."/>
            <person name="Knights A."/>
            <person name="Laird G.K."/>
            <person name="Lawlor S."/>
            <person name="Lehvaeslaiho M.H."/>
            <person name="Leversha M.A."/>
            <person name="Lloyd C."/>
            <person name="Lloyd D.M."/>
            <person name="Lovell J.D."/>
            <person name="Marsh V.L."/>
            <person name="Martin S.L."/>
            <person name="McConnachie L.J."/>
            <person name="McLay K."/>
            <person name="McMurray A.A."/>
            <person name="Milne S.A."/>
            <person name="Mistry D."/>
            <person name="Moore M.J.F."/>
            <person name="Mullikin J.C."/>
            <person name="Nickerson T."/>
            <person name="Oliver K."/>
            <person name="Parker A."/>
            <person name="Patel R."/>
            <person name="Pearce T.A.V."/>
            <person name="Peck A.I."/>
            <person name="Phillimore B.J.C.T."/>
            <person name="Prathalingam S.R."/>
            <person name="Plumb R.W."/>
            <person name="Ramsay H."/>
            <person name="Rice C.M."/>
            <person name="Ross M.T."/>
            <person name="Scott C.E."/>
            <person name="Sehra H.K."/>
            <person name="Shownkeen R."/>
            <person name="Sims S."/>
            <person name="Skuce C.D."/>
            <person name="Smith M.L."/>
            <person name="Soderlund C."/>
            <person name="Steward C.A."/>
            <person name="Sulston J.E."/>
            <person name="Swann R.M."/>
            <person name="Sycamore N."/>
            <person name="Taylor R."/>
            <person name="Tee L."/>
            <person name="Thomas D.W."/>
            <person name="Thorpe A."/>
            <person name="Tracey A."/>
            <person name="Tromans A.C."/>
            <person name="Vaudin M."/>
            <person name="Wall M."/>
            <person name="Wallis J.M."/>
            <person name="Whitehead S.L."/>
            <person name="Whittaker P."/>
            <person name="Willey D.L."/>
            <person name="Williams L."/>
            <person name="Williams S.A."/>
            <person name="Wilming L."/>
            <person name="Wray P.W."/>
            <person name="Hubbard T."/>
            <person name="Durbin R.M."/>
            <person name="Bentley D.R."/>
            <person name="Beck S."/>
            <person name="Rogers J."/>
        </authorList>
    </citation>
    <scope>NUCLEOTIDE SEQUENCE [LARGE SCALE GENOMIC DNA]</scope>
</reference>
<evidence type="ECO:0000255" key="1"/>
<evidence type="ECO:0000305" key="2"/>
<evidence type="ECO:0000312" key="3">
    <source>
        <dbReference type="HGNC" id="HGNC:27655"/>
    </source>
</evidence>
<sequence>MVPPKPALWALLLALLGTAPSRAYSPACSVPDVLRHYRAIIFEDLQAAVKWGGAGAEKTRPGSRHFHFIQKNLTRPGSSGRRGRPRASCGAQKEHSILLSISSLGRTLRGAVAGGRRGALERAAWTVAVRTEAVMRRHCRTLRQRSRRPKMRPARRRGGRRQLLLRALDAVATCWEKLFALRAPASRDS</sequence>
<dbReference type="EMBL" id="AL355803">
    <property type="status" value="NOT_ANNOTATED_CDS"/>
    <property type="molecule type" value="Genomic_DNA"/>
</dbReference>
<dbReference type="CCDS" id="CCDS86971.1"/>
<dbReference type="RefSeq" id="NP_001335019.1">
    <property type="nucleotide sequence ID" value="NM_001348090.2"/>
</dbReference>
<dbReference type="RefSeq" id="NP_001373939.1">
    <property type="nucleotide sequence ID" value="NM_001387010.1"/>
</dbReference>
<dbReference type="RefSeq" id="XP_054179363.1">
    <property type="nucleotide sequence ID" value="XM_054323388.1"/>
</dbReference>
<dbReference type="FunCoup" id="A0A1B0GTL2">
    <property type="interactions" value="11"/>
</dbReference>
<dbReference type="STRING" id="9606.ENSP00000489747"/>
<dbReference type="GlyCosmos" id="A0A1B0GTL2">
    <property type="glycosylation" value="1 site, No reported glycans"/>
</dbReference>
<dbReference type="GlyGen" id="A0A1B0GTL2">
    <property type="glycosylation" value="1 site"/>
</dbReference>
<dbReference type="MassIVE" id="A0A1B0GTL2"/>
<dbReference type="PeptideAtlas" id="A0A1B0GTL2"/>
<dbReference type="DNASU" id="284739"/>
<dbReference type="Ensembl" id="ENST00000636176.2">
    <property type="protein sequence ID" value="ENSP00000489747.1"/>
    <property type="gene ID" value="ENSG00000196421.9"/>
</dbReference>
<dbReference type="GeneID" id="284739"/>
<dbReference type="KEGG" id="hsa:284739"/>
<dbReference type="MANE-Select" id="ENST00000636176.2">
    <property type="protein sequence ID" value="ENSP00000489747.1"/>
    <property type="RefSeq nucleotide sequence ID" value="NM_001387010.1"/>
    <property type="RefSeq protein sequence ID" value="NP_001373939.1"/>
</dbReference>
<dbReference type="AGR" id="HGNC:27655"/>
<dbReference type="CTD" id="284739"/>
<dbReference type="DisGeNET" id="284739"/>
<dbReference type="GeneCards" id="C20orf204"/>
<dbReference type="HGNC" id="HGNC:27655">
    <property type="gene designation" value="C20orf204"/>
</dbReference>
<dbReference type="HPA" id="ENSG00000196421">
    <property type="expression patterns" value="Tissue enriched (brain)"/>
</dbReference>
<dbReference type="neXtProt" id="NX_A0A1B0GTL2"/>
<dbReference type="OpenTargets" id="ENSG00000196421"/>
<dbReference type="VEuPathDB" id="HostDB:ENSG00000196421"/>
<dbReference type="GeneTree" id="ENSGT00640000092841"/>
<dbReference type="InParanoid" id="A0A1B0GTL2"/>
<dbReference type="OMA" id="VMRRHCW"/>
<dbReference type="OrthoDB" id="9451460at2759"/>
<dbReference type="PAN-GO" id="A0A1B0GTL2">
    <property type="GO annotations" value="0 GO annotations based on evolutionary models"/>
</dbReference>
<dbReference type="PathwayCommons" id="A0A1B0GTL2"/>
<dbReference type="SignaLink" id="A0A1B0GTL2"/>
<dbReference type="BioGRID-ORCS" id="284739">
    <property type="hits" value="0 hits in 1 CRISPR screen"/>
</dbReference>
<dbReference type="GenomeRNAi" id="284739"/>
<dbReference type="Pharos" id="A0A1B0GTL2">
    <property type="development level" value="Tdark"/>
</dbReference>
<dbReference type="PRO" id="PR:A0A1B0GTL2"/>
<dbReference type="Proteomes" id="UP000005640">
    <property type="component" value="Chromosome 20"/>
</dbReference>
<dbReference type="Bgee" id="ENSG00000196421">
    <property type="expression patterns" value="Expressed in right hemisphere of cerebellum and 95 other cell types or tissues"/>
</dbReference>
<dbReference type="ExpressionAtlas" id="A0A1B0GTL2">
    <property type="expression patterns" value="baseline and differential"/>
</dbReference>
<feature type="signal peptide" evidence="1">
    <location>
        <begin position="1"/>
        <end position="23"/>
    </location>
</feature>
<feature type="chain" id="PRO_5008408615" description="Uncharacterized protein C20orf204" evidence="1">
    <location>
        <begin position="24"/>
        <end position="189"/>
    </location>
</feature>
<feature type="glycosylation site" description="N-linked (GlcNAc...) asparagine" evidence="1">
    <location>
        <position position="72"/>
    </location>
</feature>
<keyword id="KW-0325">Glycoprotein</keyword>
<keyword id="KW-1267">Proteomics identification</keyword>
<keyword id="KW-1185">Reference proteome</keyword>
<keyword id="KW-0732">Signal</keyword>
<organism>
    <name type="scientific">Homo sapiens</name>
    <name type="common">Human</name>
    <dbReference type="NCBI Taxonomy" id="9606"/>
    <lineage>
        <taxon>Eukaryota</taxon>
        <taxon>Metazoa</taxon>
        <taxon>Chordata</taxon>
        <taxon>Craniata</taxon>
        <taxon>Vertebrata</taxon>
        <taxon>Euteleostomi</taxon>
        <taxon>Mammalia</taxon>
        <taxon>Eutheria</taxon>
        <taxon>Euarchontoglires</taxon>
        <taxon>Primates</taxon>
        <taxon>Haplorrhini</taxon>
        <taxon>Catarrhini</taxon>
        <taxon>Hominidae</taxon>
        <taxon>Homo</taxon>
    </lineage>
</organism>
<protein>
    <recommendedName>
        <fullName evidence="2">Uncharacterized protein C20orf204</fullName>
    </recommendedName>
</protein>
<comment type="caution">
    <text evidence="2">Encoded in an intron of the ZNF512B gene (opposite strand).</text>
</comment>
<name>CT204_HUMAN</name>
<gene>
    <name evidence="3" type="primary">C20orf204</name>
    <name evidence="3" type="synonym">PRR17</name>
</gene>
<accession>A0A1B0GTL2</accession>